<dbReference type="EC" id="2.4.1.187" evidence="1 2"/>
<dbReference type="EMBL" id="AJ313428">
    <property type="protein sequence ID" value="CAC86111.1"/>
    <property type="molecule type" value="Genomic_DNA"/>
</dbReference>
<dbReference type="EMBL" id="AM260209">
    <property type="protein sequence ID" value="CAJ97398.1"/>
    <property type="molecule type" value="Genomic_DNA"/>
</dbReference>
<dbReference type="EMBL" id="CP002183">
    <property type="protein sequence ID" value="ADM39546.1"/>
    <property type="molecule type" value="Genomic_DNA"/>
</dbReference>
<dbReference type="SMR" id="Q8RKI7"/>
<dbReference type="CAZy" id="GT26">
    <property type="family name" value="Glycosyltransferase Family 26"/>
</dbReference>
<dbReference type="KEGG" id="bss:BSUW23_17555"/>
<dbReference type="HOGENOM" id="CLU_063203_3_1_9"/>
<dbReference type="BioCyc" id="MetaCyc:MONOMER-19961"/>
<dbReference type="UniPathway" id="UPA00790"/>
<dbReference type="Proteomes" id="UP000002233">
    <property type="component" value="Chromosome"/>
</dbReference>
<dbReference type="GO" id="GO:0047244">
    <property type="term" value="F:N-acetylglucosaminyldiphosphoundecaprenol N-acetyl-beta-D-mannosaminyltransferase activity"/>
    <property type="evidence" value="ECO:0007669"/>
    <property type="project" value="UniProtKB-UniRule"/>
</dbReference>
<dbReference type="GO" id="GO:0071555">
    <property type="term" value="P:cell wall organization"/>
    <property type="evidence" value="ECO:0007669"/>
    <property type="project" value="UniProtKB-KW"/>
</dbReference>
<dbReference type="GO" id="GO:0019350">
    <property type="term" value="P:teichoic acid biosynthetic process"/>
    <property type="evidence" value="ECO:0007669"/>
    <property type="project" value="UniProtKB-UniRule"/>
</dbReference>
<dbReference type="CDD" id="cd06533">
    <property type="entry name" value="Glyco_transf_WecG_TagA"/>
    <property type="match status" value="1"/>
</dbReference>
<dbReference type="HAMAP" id="MF_02070">
    <property type="entry name" value="TagA_TarA"/>
    <property type="match status" value="1"/>
</dbReference>
<dbReference type="InterPro" id="IPR034714">
    <property type="entry name" value="TagA_TarA"/>
</dbReference>
<dbReference type="InterPro" id="IPR004629">
    <property type="entry name" value="WecG_TagA_CpsF"/>
</dbReference>
<dbReference type="NCBIfam" id="TIGR00696">
    <property type="entry name" value="wecG_tagA_cpsF"/>
    <property type="match status" value="1"/>
</dbReference>
<dbReference type="PANTHER" id="PTHR34136">
    <property type="match status" value="1"/>
</dbReference>
<dbReference type="PANTHER" id="PTHR34136:SF1">
    <property type="entry name" value="UDP-N-ACETYL-D-MANNOSAMINURONIC ACID TRANSFERASE"/>
    <property type="match status" value="1"/>
</dbReference>
<dbReference type="Pfam" id="PF03808">
    <property type="entry name" value="Glyco_tran_WecG"/>
    <property type="match status" value="1"/>
</dbReference>
<name>TARA_BACSH</name>
<gene>
    <name evidence="3" type="primary">tarA</name>
    <name type="ordered locus">BSUW23_17555</name>
</gene>
<organism>
    <name type="scientific">Bacillus spizizenii (strain ATCC 23059 / NRRL B-14472 / W23)</name>
    <name type="common">Bacillus subtilis subsp. spizizenii</name>
    <dbReference type="NCBI Taxonomy" id="655816"/>
    <lineage>
        <taxon>Bacteria</taxon>
        <taxon>Bacillati</taxon>
        <taxon>Bacillota</taxon>
        <taxon>Bacilli</taxon>
        <taxon>Bacillales</taxon>
        <taxon>Bacillaceae</taxon>
        <taxon>Bacillus</taxon>
    </lineage>
</organism>
<accession>Q8RKI7</accession>
<accession>B7ZDK9</accession>
<accession>E0U4X5</accession>
<protein>
    <recommendedName>
        <fullName evidence="2">N-acetylglucosaminyldiphosphoundecaprenol N-acetyl-beta-D-mannosaminyltransferase</fullName>
        <ecNumber evidence="1 2">2.4.1.187</ecNumber>
    </recommendedName>
    <alternativeName>
        <fullName evidence="2">N-acetylmannosaminyltransferase</fullName>
    </alternativeName>
    <alternativeName>
        <fullName evidence="2">UDP-N-acetylmannosamine transferase</fullName>
    </alternativeName>
    <alternativeName>
        <fullName evidence="2">UDP-N-acetylmannosamine:N-acetylglucosaminyl pyrophosphorylundecaprenol N-acetylmannosaminyltransferase</fullName>
    </alternativeName>
</protein>
<evidence type="ECO:0000250" key="1">
    <source>
        <dbReference type="UniProtKB" id="P27620"/>
    </source>
</evidence>
<evidence type="ECO:0000255" key="2">
    <source>
        <dbReference type="HAMAP-Rule" id="MF_02070"/>
    </source>
</evidence>
<evidence type="ECO:0000303" key="3">
    <source>
    </source>
</evidence>
<evidence type="ECO:0000305" key="4">
    <source>
    </source>
</evidence>
<keyword id="KW-0961">Cell wall biogenesis/degradation</keyword>
<keyword id="KW-0328">Glycosyltransferase</keyword>
<keyword id="KW-0777">Teichoic acid biosynthesis</keyword>
<keyword id="KW-0808">Transferase</keyword>
<reference key="1">
    <citation type="journal article" date="2002" name="Microbiology">
        <title>Comparison of ribitol and glycerol teichoic acid genes in Bacillus subtilis W23 and 168: identical function, similar divergent organization, but different regulation.</title>
        <authorList>
            <person name="Lazarevic V."/>
            <person name="Abellan F.-X."/>
            <person name="Beggah Moeller S."/>
            <person name="Karamata D."/>
            <person name="Maueel C."/>
        </authorList>
    </citation>
    <scope>NUCLEOTIDE SEQUENCE [GENOMIC DNA]</scope>
    <scope>PUTATIVE FUNCTION</scope>
    <source>
        <strain>ATCC 23059 / NRRL B-14472 / W23</strain>
    </source>
</reference>
<reference key="2">
    <citation type="submission" date="2006-04" db="EMBL/GenBank/DDBJ databases">
        <title>Minor teichoic acid of Bacillus subtilis W23.</title>
        <authorList>
            <person name="Soldo B."/>
            <person name="Freymond P.P."/>
            <person name="Karamata D."/>
            <person name="Lazarevic V."/>
        </authorList>
    </citation>
    <scope>NUCLEOTIDE SEQUENCE [GENOMIC DNA]</scope>
    <source>
        <strain>ATCC 23059 / NRRL B-14472 / W23</strain>
    </source>
</reference>
<reference key="3">
    <citation type="journal article" date="2011" name="Microbiology">
        <title>The genome sequence of Bacillus subtilis subsp. spizizenii W23: insights into speciation within the B. subtilis complex and into the history of B. subtilis genetics.</title>
        <authorList>
            <person name="Zeigler D.R."/>
        </authorList>
    </citation>
    <scope>NUCLEOTIDE SEQUENCE [LARGE SCALE GENOMIC DNA]</scope>
    <source>
        <strain>ATCC 23059 / NRRL B-14472 / W23</strain>
    </source>
</reference>
<proteinExistence type="inferred from homology"/>
<feature type="chain" id="PRO_0000208439" description="N-acetylglucosaminyldiphosphoundecaprenol N-acetyl-beta-D-mannosaminyltransferase">
    <location>
        <begin position="1"/>
        <end position="257"/>
    </location>
</feature>
<comment type="function">
    <text evidence="2">Catalyzes the conversion of GlcNAc-PP-undecaprenol into ManNAc-GlcNAc-PP-undecaprenol, the first committed lipid intermediate in the de novo synthesis of teichoic acid.</text>
</comment>
<comment type="catalytic activity">
    <reaction evidence="2">
        <text>UDP-N-acetyl-alpha-D-mannosamine + N-acetyl-alpha-D-glucosaminyl-di-trans,octa-cis-undecaprenyl diphosphate = N-acetyl-beta-D-mannosaminyl-(1-&gt;4)-N-acetyl-alpha-D-glucosaminyl di-trans,octa-cis-undecaprenyl diphosphate + UDP + H(+)</text>
        <dbReference type="Rhea" id="RHEA:16053"/>
        <dbReference type="ChEBI" id="CHEBI:15378"/>
        <dbReference type="ChEBI" id="CHEBI:58223"/>
        <dbReference type="ChEBI" id="CHEBI:62959"/>
        <dbReference type="ChEBI" id="CHEBI:68623"/>
        <dbReference type="ChEBI" id="CHEBI:132210"/>
        <dbReference type="EC" id="2.4.1.187"/>
    </reaction>
</comment>
<comment type="pathway">
    <text evidence="4">Cell wall biogenesis; poly(ribitol phosphate) teichoic acid biosynthesis.</text>
</comment>
<comment type="similarity">
    <text evidence="2">Belongs to the glycosyltransferase 26 family. TagA/TarA subfamily.</text>
</comment>
<sequence length="257" mass="29140">MQTKPINQLDFVDSELTSFVSHLETTYLDQNKGAFIVTANPEIGFEAMQNPRYEAVLSSADFILPDGIGVVMVSKLIGKPLQSRIAGYDLFTSLLDKADQKKKRVFFYGAAKHVIAETIERVKRDFPGIEIAGYSDGYVKDQREVADKIAASTPDMVFVALGYPNQEFFIHKYRHLFPQAVAVGLGGSFDVFSGNVKRAPSFFIRFHLEWMYRLLTNPARWRRMLSIPKYVTAVLKHERASAKPHYTGQVKDQSRHL</sequence>